<feature type="chain" id="PRO_0000190467" description="Ribonucleoside-diphosphate reductase small chain">
    <location>
        <begin position="1"/>
        <end position="329"/>
    </location>
</feature>
<feature type="active site" evidence="2">
    <location>
        <position position="113"/>
    </location>
</feature>
<feature type="binding site" evidence="2">
    <location>
        <position position="75"/>
    </location>
    <ligand>
        <name>Fe cation</name>
        <dbReference type="ChEBI" id="CHEBI:24875"/>
        <label>1</label>
    </ligand>
</feature>
<feature type="binding site" evidence="2">
    <location>
        <position position="106"/>
    </location>
    <ligand>
        <name>Fe cation</name>
        <dbReference type="ChEBI" id="CHEBI:24875"/>
        <label>1</label>
    </ligand>
</feature>
<feature type="binding site" evidence="1">
    <location>
        <position position="106"/>
    </location>
    <ligand>
        <name>Fe cation</name>
        <dbReference type="ChEBI" id="CHEBI:24875"/>
        <label>2</label>
    </ligand>
</feature>
<feature type="binding site" evidence="2">
    <location>
        <position position="109"/>
    </location>
    <ligand>
        <name>Fe cation</name>
        <dbReference type="ChEBI" id="CHEBI:24875"/>
        <label>1</label>
    </ligand>
</feature>
<feature type="binding site" evidence="1">
    <location>
        <position position="168"/>
    </location>
    <ligand>
        <name>Fe cation</name>
        <dbReference type="ChEBI" id="CHEBI:24875"/>
        <label>2</label>
    </ligand>
</feature>
<feature type="binding site" evidence="1">
    <location>
        <position position="202"/>
    </location>
    <ligand>
        <name>Fe cation</name>
        <dbReference type="ChEBI" id="CHEBI:24875"/>
        <label>2</label>
    </ligand>
</feature>
<feature type="binding site" evidence="1">
    <location>
        <position position="205"/>
    </location>
    <ligand>
        <name>Fe cation</name>
        <dbReference type="ChEBI" id="CHEBI:24875"/>
        <label>2</label>
    </ligand>
</feature>
<evidence type="ECO:0000250" key="1"/>
<evidence type="ECO:0000255" key="2">
    <source>
        <dbReference type="PROSITE-ProRule" id="PRU10014"/>
    </source>
</evidence>
<evidence type="ECO:0000305" key="3"/>
<accession>P49730</accession>
<protein>
    <recommendedName>
        <fullName>Ribonucleoside-diphosphate reductase small chain</fullName>
        <ecNumber>1.17.4.1</ecNumber>
    </recommendedName>
    <alternativeName>
        <fullName>Ribonucleoside-diphosphate reductase R2 subunit</fullName>
    </alternativeName>
    <alternativeName>
        <fullName>Ribonucleotide reductase small subunit</fullName>
    </alternativeName>
</protein>
<proteinExistence type="evidence at transcript level"/>
<comment type="function">
    <text>Provides the precursors necessary for DNA synthesis. Catalyzes the biosynthesis of deoxyribonucleotides from the corresponding ribonucleotides.</text>
</comment>
<comment type="catalytic activity">
    <reaction evidence="2">
        <text>a 2'-deoxyribonucleoside 5'-diphosphate + [thioredoxin]-disulfide + H2O = a ribonucleoside 5'-diphosphate + [thioredoxin]-dithiol</text>
        <dbReference type="Rhea" id="RHEA:23252"/>
        <dbReference type="Rhea" id="RHEA-COMP:10698"/>
        <dbReference type="Rhea" id="RHEA-COMP:10700"/>
        <dbReference type="ChEBI" id="CHEBI:15377"/>
        <dbReference type="ChEBI" id="CHEBI:29950"/>
        <dbReference type="ChEBI" id="CHEBI:50058"/>
        <dbReference type="ChEBI" id="CHEBI:57930"/>
        <dbReference type="ChEBI" id="CHEBI:73316"/>
        <dbReference type="EC" id="1.17.4.1"/>
    </reaction>
</comment>
<comment type="cofactor">
    <cofactor evidence="1">
        <name>Fe cation</name>
        <dbReference type="ChEBI" id="CHEBI:24875"/>
    </cofactor>
    <text evidence="1">Binds 2 iron ions per subunit.</text>
</comment>
<comment type="subunit">
    <text>Heterodimer of a large and a small chain.</text>
</comment>
<comment type="subcellular location">
    <subcellularLocation>
        <location evidence="1">Cytoplasm</location>
    </subcellularLocation>
</comment>
<comment type="induction">
    <text>Maximum level of expression in mid-S phase.</text>
</comment>
<comment type="similarity">
    <text evidence="3">Belongs to the ribonucleoside diphosphate reductase small chain family.</text>
</comment>
<organism>
    <name type="scientific">Nicotiana tabacum</name>
    <name type="common">Common tobacco</name>
    <dbReference type="NCBI Taxonomy" id="4097"/>
    <lineage>
        <taxon>Eukaryota</taxon>
        <taxon>Viridiplantae</taxon>
        <taxon>Streptophyta</taxon>
        <taxon>Embryophyta</taxon>
        <taxon>Tracheophyta</taxon>
        <taxon>Spermatophyta</taxon>
        <taxon>Magnoliopsida</taxon>
        <taxon>eudicotyledons</taxon>
        <taxon>Gunneridae</taxon>
        <taxon>Pentapetalae</taxon>
        <taxon>asterids</taxon>
        <taxon>lamiids</taxon>
        <taxon>Solanales</taxon>
        <taxon>Solanaceae</taxon>
        <taxon>Nicotianoideae</taxon>
        <taxon>Nicotianeae</taxon>
        <taxon>Nicotiana</taxon>
    </lineage>
</organism>
<name>RIR2_TOBAC</name>
<keyword id="KW-0963">Cytoplasm</keyword>
<keyword id="KW-0215">Deoxyribonucleotide synthesis</keyword>
<keyword id="KW-0408">Iron</keyword>
<keyword id="KW-0479">Metal-binding</keyword>
<keyword id="KW-0560">Oxidoreductase</keyword>
<keyword id="KW-1185">Reference proteome</keyword>
<dbReference type="EC" id="1.17.4.1"/>
<dbReference type="EMBL" id="X92443">
    <property type="protein sequence ID" value="CAA63194.1"/>
    <property type="molecule type" value="mRNA"/>
</dbReference>
<dbReference type="PIR" id="T03688">
    <property type="entry name" value="T03688"/>
</dbReference>
<dbReference type="RefSeq" id="NP_001312237.1">
    <property type="nucleotide sequence ID" value="NM_001325308.1"/>
</dbReference>
<dbReference type="SMR" id="P49730"/>
<dbReference type="STRING" id="4097.P49730"/>
<dbReference type="PaxDb" id="4097-P49730"/>
<dbReference type="GeneID" id="107781035"/>
<dbReference type="KEGG" id="nta:107781035"/>
<dbReference type="OrthoDB" id="10248373at2759"/>
<dbReference type="Proteomes" id="UP000084051">
    <property type="component" value="Unplaced"/>
</dbReference>
<dbReference type="GO" id="GO:0005737">
    <property type="term" value="C:cytoplasm"/>
    <property type="evidence" value="ECO:0007669"/>
    <property type="project" value="UniProtKB-SubCell"/>
</dbReference>
<dbReference type="GO" id="GO:0046872">
    <property type="term" value="F:metal ion binding"/>
    <property type="evidence" value="ECO:0007669"/>
    <property type="project" value="UniProtKB-KW"/>
</dbReference>
<dbReference type="GO" id="GO:0004748">
    <property type="term" value="F:ribonucleoside-diphosphate reductase activity, thioredoxin disulfide as acceptor"/>
    <property type="evidence" value="ECO:0007669"/>
    <property type="project" value="UniProtKB-EC"/>
</dbReference>
<dbReference type="GO" id="GO:0009263">
    <property type="term" value="P:deoxyribonucleotide biosynthetic process"/>
    <property type="evidence" value="ECO:0007669"/>
    <property type="project" value="UniProtKB-KW"/>
</dbReference>
<dbReference type="CDD" id="cd01049">
    <property type="entry name" value="RNRR2"/>
    <property type="match status" value="1"/>
</dbReference>
<dbReference type="Gene3D" id="1.10.620.20">
    <property type="entry name" value="Ribonucleotide Reductase, subunit A"/>
    <property type="match status" value="1"/>
</dbReference>
<dbReference type="InterPro" id="IPR009078">
    <property type="entry name" value="Ferritin-like_SF"/>
</dbReference>
<dbReference type="InterPro" id="IPR012348">
    <property type="entry name" value="RNR-like"/>
</dbReference>
<dbReference type="InterPro" id="IPR033909">
    <property type="entry name" value="RNR_small"/>
</dbReference>
<dbReference type="InterPro" id="IPR030475">
    <property type="entry name" value="RNR_small_AS"/>
</dbReference>
<dbReference type="InterPro" id="IPR000358">
    <property type="entry name" value="RNR_small_fam"/>
</dbReference>
<dbReference type="PANTHER" id="PTHR23409">
    <property type="entry name" value="RIBONUCLEOSIDE-DIPHOSPHATE REDUCTASE SMALL CHAIN"/>
    <property type="match status" value="1"/>
</dbReference>
<dbReference type="PANTHER" id="PTHR23409:SF18">
    <property type="entry name" value="RIBONUCLEOSIDE-DIPHOSPHATE REDUCTASE SUBUNIT M2"/>
    <property type="match status" value="1"/>
</dbReference>
<dbReference type="Pfam" id="PF00268">
    <property type="entry name" value="Ribonuc_red_sm"/>
    <property type="match status" value="1"/>
</dbReference>
<dbReference type="SUPFAM" id="SSF47240">
    <property type="entry name" value="Ferritin-like"/>
    <property type="match status" value="1"/>
</dbReference>
<dbReference type="PROSITE" id="PS00368">
    <property type="entry name" value="RIBORED_SMALL"/>
    <property type="match status" value="1"/>
</dbReference>
<sequence length="329" mass="37608">MPLIPEEPLLASSPDRFCMFPIQYPQIWEMYKKALASFWTAEEVDLSSDTRHWETLTPGERHFITHVLAFFAASDGIVLENLAGRFMKEVQVAEARAFYGFQIAIENIHSEMYSLLLESYIKDSDEKSRLFRAVETNPCVEKKAKWALRWIDGSETFAERLVAFACVEGIFFSGSFCAIFWLKKRGLMPGLTFSNELISRDEGLHCDFACLLYSLLRTKLTEERVKGIVADAVEIEREFVCDALPCALVGMNGDLMSKYIEFVADRLLDALGYDKLYNAQNPFDWMELISLQGKTNFFEKRVGEYQKASVMSSLNGNGATHEFKLDEDF</sequence>
<reference key="1">
    <citation type="journal article" date="1998" name="Plant Mol. Biol.">
        <title>Molecular characterization of tobacco ribonucleotide reductase RNR1 and RNR2 cDNAs and cell cycle-regulated expression in synchronized plant cells.</title>
        <authorList>
            <person name="Chaboute M.-E."/>
            <person name="Combettes B."/>
            <person name="Clement B."/>
            <person name="Gigot C."/>
            <person name="Philipps G."/>
        </authorList>
    </citation>
    <scope>NUCLEOTIDE SEQUENCE [MRNA]</scope>
    <source>
        <strain>cv. Bright Yellow 2</strain>
    </source>
</reference>